<reference key="1">
    <citation type="submission" date="2007-06" db="EMBL/GenBank/DDBJ databases">
        <authorList>
            <person name="Dodson R.J."/>
            <person name="Harkins D."/>
            <person name="Paulsen I.T."/>
        </authorList>
    </citation>
    <scope>NUCLEOTIDE SEQUENCE [LARGE SCALE GENOMIC DNA]</scope>
    <source>
        <strain>DSM 24068 / PA7</strain>
    </source>
</reference>
<protein>
    <recommendedName>
        <fullName evidence="1">Anhydro-N-acetylmuramic acid kinase</fullName>
        <ecNumber evidence="1">2.7.1.170</ecNumber>
    </recommendedName>
    <alternativeName>
        <fullName evidence="1">AnhMurNAc kinase</fullName>
    </alternativeName>
</protein>
<evidence type="ECO:0000255" key="1">
    <source>
        <dbReference type="HAMAP-Rule" id="MF_01270"/>
    </source>
</evidence>
<dbReference type="EC" id="2.7.1.170" evidence="1"/>
<dbReference type="EMBL" id="CP000744">
    <property type="protein sequence ID" value="ABR85973.1"/>
    <property type="molecule type" value="Genomic_DNA"/>
</dbReference>
<dbReference type="RefSeq" id="WP_034000208.1">
    <property type="nucleotide sequence ID" value="NC_009656.1"/>
</dbReference>
<dbReference type="SMR" id="A6UZG7"/>
<dbReference type="KEGG" id="pap:PSPA7_0807"/>
<dbReference type="HOGENOM" id="CLU_038782_0_0_6"/>
<dbReference type="UniPathway" id="UPA00343"/>
<dbReference type="UniPathway" id="UPA00544"/>
<dbReference type="Proteomes" id="UP000001582">
    <property type="component" value="Chromosome"/>
</dbReference>
<dbReference type="GO" id="GO:0005524">
    <property type="term" value="F:ATP binding"/>
    <property type="evidence" value="ECO:0007669"/>
    <property type="project" value="UniProtKB-UniRule"/>
</dbReference>
<dbReference type="GO" id="GO:0016301">
    <property type="term" value="F:kinase activity"/>
    <property type="evidence" value="ECO:0007669"/>
    <property type="project" value="UniProtKB-KW"/>
</dbReference>
<dbReference type="GO" id="GO:0016773">
    <property type="term" value="F:phosphotransferase activity, alcohol group as acceptor"/>
    <property type="evidence" value="ECO:0007669"/>
    <property type="project" value="UniProtKB-UniRule"/>
</dbReference>
<dbReference type="GO" id="GO:0097175">
    <property type="term" value="P:1,6-anhydro-N-acetyl-beta-muramic acid catabolic process"/>
    <property type="evidence" value="ECO:0007669"/>
    <property type="project" value="UniProtKB-UniRule"/>
</dbReference>
<dbReference type="GO" id="GO:0006040">
    <property type="term" value="P:amino sugar metabolic process"/>
    <property type="evidence" value="ECO:0007669"/>
    <property type="project" value="InterPro"/>
</dbReference>
<dbReference type="GO" id="GO:0009254">
    <property type="term" value="P:peptidoglycan turnover"/>
    <property type="evidence" value="ECO:0007669"/>
    <property type="project" value="UniProtKB-UniRule"/>
</dbReference>
<dbReference type="CDD" id="cd24050">
    <property type="entry name" value="ASKHA_NBD_ANMK"/>
    <property type="match status" value="1"/>
</dbReference>
<dbReference type="Gene3D" id="3.30.420.40">
    <property type="match status" value="2"/>
</dbReference>
<dbReference type="HAMAP" id="MF_01270">
    <property type="entry name" value="AnhMurNAc_kinase"/>
    <property type="match status" value="1"/>
</dbReference>
<dbReference type="InterPro" id="IPR005338">
    <property type="entry name" value="Anhydro_N_Ac-Mur_kinase"/>
</dbReference>
<dbReference type="InterPro" id="IPR043129">
    <property type="entry name" value="ATPase_NBD"/>
</dbReference>
<dbReference type="NCBIfam" id="NF007139">
    <property type="entry name" value="PRK09585.1-3"/>
    <property type="match status" value="1"/>
</dbReference>
<dbReference type="PANTHER" id="PTHR30605">
    <property type="entry name" value="ANHYDRO-N-ACETYLMURAMIC ACID KINASE"/>
    <property type="match status" value="1"/>
</dbReference>
<dbReference type="PANTHER" id="PTHR30605:SF0">
    <property type="entry name" value="ANHYDRO-N-ACETYLMURAMIC ACID KINASE"/>
    <property type="match status" value="1"/>
</dbReference>
<dbReference type="Pfam" id="PF03702">
    <property type="entry name" value="AnmK"/>
    <property type="match status" value="1"/>
</dbReference>
<dbReference type="SUPFAM" id="SSF53067">
    <property type="entry name" value="Actin-like ATPase domain"/>
    <property type="match status" value="1"/>
</dbReference>
<sequence length="365" mass="38932">MIMPRYLGLMSGTSMDGMDIVLIEQGDRTTLLASHYLPMPADLREDILALCAPGPDEIARAADVERRWVGLAAQGVGELLRQQRLAPGAVRAIGSHGQTIRHEPARHFTVQIGNPALLAELTGIDVIADFRRRDVAAGGQGAPLVPAFHQALFGDSGKARAILNIGGFSNVSLLAPGKPVRGFDCGPGNVLMDAWIHCRRGEHFDRDGAWAASGRVNDDLLASLLADEFFATRGPKSTGRERFNLAWLQERLAGHPVLPAEDVQATLLELSARSISESLLDAQPECEEVLVCGGGAFNAALMARLAALMPAARIASTDAYGIPPAWMEGMAFAWLAHRFLERLPGNCPDVTGAAGPRVLGALYPA</sequence>
<proteinExistence type="inferred from homology"/>
<gene>
    <name evidence="1" type="primary">anmK</name>
    <name type="ordered locus">PSPA7_0807</name>
</gene>
<name>ANMK_PSEP7</name>
<accession>A6UZG7</accession>
<keyword id="KW-0067">ATP-binding</keyword>
<keyword id="KW-0119">Carbohydrate metabolism</keyword>
<keyword id="KW-0418">Kinase</keyword>
<keyword id="KW-0547">Nucleotide-binding</keyword>
<keyword id="KW-0808">Transferase</keyword>
<feature type="chain" id="PRO_1000067356" description="Anhydro-N-acetylmuramic acid kinase">
    <location>
        <begin position="1"/>
        <end position="365"/>
    </location>
</feature>
<feature type="binding site" evidence="1">
    <location>
        <begin position="12"/>
        <end position="19"/>
    </location>
    <ligand>
        <name>ATP</name>
        <dbReference type="ChEBI" id="CHEBI:30616"/>
    </ligand>
</feature>
<organism>
    <name type="scientific">Pseudomonas paraeruginosa (strain DSM 24068 / PA7)</name>
    <name type="common">Pseudomonas aeruginosa (strain PA7)</name>
    <dbReference type="NCBI Taxonomy" id="381754"/>
    <lineage>
        <taxon>Bacteria</taxon>
        <taxon>Pseudomonadati</taxon>
        <taxon>Pseudomonadota</taxon>
        <taxon>Gammaproteobacteria</taxon>
        <taxon>Pseudomonadales</taxon>
        <taxon>Pseudomonadaceae</taxon>
        <taxon>Pseudomonas</taxon>
        <taxon>Pseudomonas paraeruginosa</taxon>
    </lineage>
</organism>
<comment type="function">
    <text evidence="1">Catalyzes the specific phosphorylation of 1,6-anhydro-N-acetylmuramic acid (anhMurNAc) with the simultaneous cleavage of the 1,6-anhydro ring, generating MurNAc-6-P. Is required for the utilization of anhMurNAc either imported from the medium or derived from its own cell wall murein, and thus plays a role in cell wall recycling.</text>
</comment>
<comment type="catalytic activity">
    <reaction evidence="1">
        <text>1,6-anhydro-N-acetyl-beta-muramate + ATP + H2O = N-acetyl-D-muramate 6-phosphate + ADP + H(+)</text>
        <dbReference type="Rhea" id="RHEA:24952"/>
        <dbReference type="ChEBI" id="CHEBI:15377"/>
        <dbReference type="ChEBI" id="CHEBI:15378"/>
        <dbReference type="ChEBI" id="CHEBI:30616"/>
        <dbReference type="ChEBI" id="CHEBI:58690"/>
        <dbReference type="ChEBI" id="CHEBI:58722"/>
        <dbReference type="ChEBI" id="CHEBI:456216"/>
        <dbReference type="EC" id="2.7.1.170"/>
    </reaction>
</comment>
<comment type="pathway">
    <text evidence="1">Amino-sugar metabolism; 1,6-anhydro-N-acetylmuramate degradation.</text>
</comment>
<comment type="pathway">
    <text evidence="1">Cell wall biogenesis; peptidoglycan recycling.</text>
</comment>
<comment type="similarity">
    <text evidence="1">Belongs to the anhydro-N-acetylmuramic acid kinase family.</text>
</comment>